<sequence length="261" mass="27834">MIVIKVGGSVVCKDVSKVIQNLPKYADRAIIVHGGGCLVNEMLKRLGIEPKFLTHPGGLTSRYTDLETLKVFVMAMSWINKQIVASLHALGVEALGLTGADLGVVRAKRKEKVLIVDERGRQRVVDGGYVGRVVHIAADRLKPPPLKVLSPIAVSEKGELLNVDGDQLAFDVAKAVGARQLVLLSDVDGLIIGGRVVPHLTAEEAEELVKSEEVRGGMKRKLLMAAEAAKSGIEVVISNGLVENPIDVALNGSGTHIVKNL</sequence>
<name>LYSZ_PYRIL</name>
<protein>
    <recommendedName>
        <fullName evidence="1">Putative [LysW]-aminoadipate/[LysW]-glutamate kinase</fullName>
        <ecNumber evidence="1">2.7.2.17</ecNumber>
        <ecNumber evidence="1">2.7.2.19</ecNumber>
    </recommendedName>
</protein>
<feature type="chain" id="PRO_1000010535" description="Putative [LysW]-aminoadipate/[LysW]-glutamate kinase">
    <location>
        <begin position="1"/>
        <end position="261"/>
    </location>
</feature>
<feature type="binding site" evidence="1">
    <location>
        <begin position="35"/>
        <end position="36"/>
    </location>
    <ligand>
        <name>substrate</name>
    </ligand>
</feature>
<feature type="binding site" evidence="1">
    <location>
        <position position="62"/>
    </location>
    <ligand>
        <name>substrate</name>
    </ligand>
</feature>
<feature type="binding site" evidence="1">
    <location>
        <position position="162"/>
    </location>
    <ligand>
        <name>substrate</name>
    </ligand>
</feature>
<feature type="site" description="Transition state stabilizer" evidence="1">
    <location>
        <position position="5"/>
    </location>
</feature>
<feature type="site" description="Transition state stabilizer" evidence="1">
    <location>
        <position position="221"/>
    </location>
</feature>
<organism>
    <name type="scientific">Pyrobaculum islandicum (strain DSM 4184 / JCM 9189 / GEO3)</name>
    <dbReference type="NCBI Taxonomy" id="384616"/>
    <lineage>
        <taxon>Archaea</taxon>
        <taxon>Thermoproteota</taxon>
        <taxon>Thermoprotei</taxon>
        <taxon>Thermoproteales</taxon>
        <taxon>Thermoproteaceae</taxon>
        <taxon>Pyrobaculum</taxon>
    </lineage>
</organism>
<keyword id="KW-0028">Amino-acid biosynthesis</keyword>
<keyword id="KW-0055">Arginine biosynthesis</keyword>
<keyword id="KW-0067">ATP-binding</keyword>
<keyword id="KW-0963">Cytoplasm</keyword>
<keyword id="KW-0418">Kinase</keyword>
<keyword id="KW-0457">Lysine biosynthesis</keyword>
<keyword id="KW-0547">Nucleotide-binding</keyword>
<keyword id="KW-0808">Transferase</keyword>
<dbReference type="EC" id="2.7.2.17" evidence="1"/>
<dbReference type="EC" id="2.7.2.19" evidence="1"/>
<dbReference type="EMBL" id="CP000504">
    <property type="protein sequence ID" value="ABL87456.1"/>
    <property type="molecule type" value="Genomic_DNA"/>
</dbReference>
<dbReference type="RefSeq" id="WP_011762033.1">
    <property type="nucleotide sequence ID" value="NC_008701.1"/>
</dbReference>
<dbReference type="SMR" id="A1RR74"/>
<dbReference type="STRING" id="384616.Pisl_0277"/>
<dbReference type="GeneID" id="4617001"/>
<dbReference type="KEGG" id="pis:Pisl_0277"/>
<dbReference type="eggNOG" id="arCOG00862">
    <property type="taxonomic scope" value="Archaea"/>
</dbReference>
<dbReference type="HOGENOM" id="CLU_053680_2_0_2"/>
<dbReference type="OrthoDB" id="6816at2157"/>
<dbReference type="UniPathway" id="UPA00033">
    <property type="reaction ID" value="UER00036"/>
</dbReference>
<dbReference type="UniPathway" id="UPA00068"/>
<dbReference type="Proteomes" id="UP000002595">
    <property type="component" value="Chromosome"/>
</dbReference>
<dbReference type="GO" id="GO:0005737">
    <property type="term" value="C:cytoplasm"/>
    <property type="evidence" value="ECO:0007669"/>
    <property type="project" value="UniProtKB-SubCell"/>
</dbReference>
<dbReference type="GO" id="GO:0003991">
    <property type="term" value="F:acetylglutamate kinase activity"/>
    <property type="evidence" value="ECO:0007669"/>
    <property type="project" value="TreeGrafter"/>
</dbReference>
<dbReference type="GO" id="GO:0005524">
    <property type="term" value="F:ATP binding"/>
    <property type="evidence" value="ECO:0007669"/>
    <property type="project" value="UniProtKB-KW"/>
</dbReference>
<dbReference type="GO" id="GO:0043744">
    <property type="term" value="F:N2-acetyl-L-aminoadipate kinase activity"/>
    <property type="evidence" value="ECO:0007669"/>
    <property type="project" value="RHEA"/>
</dbReference>
<dbReference type="GO" id="GO:0042450">
    <property type="term" value="P:arginine biosynthetic process via ornithine"/>
    <property type="evidence" value="ECO:0007669"/>
    <property type="project" value="UniProtKB-UniRule"/>
</dbReference>
<dbReference type="GO" id="GO:0006526">
    <property type="term" value="P:L-arginine biosynthetic process"/>
    <property type="evidence" value="ECO:0007669"/>
    <property type="project" value="UniProtKB-UniPathway"/>
</dbReference>
<dbReference type="GO" id="GO:0019878">
    <property type="term" value="P:lysine biosynthetic process via aminoadipic acid"/>
    <property type="evidence" value="ECO:0007669"/>
    <property type="project" value="UniProtKB-UniRule"/>
</dbReference>
<dbReference type="CDD" id="cd04251">
    <property type="entry name" value="AAK_NAGK-UC"/>
    <property type="match status" value="1"/>
</dbReference>
<dbReference type="Gene3D" id="3.40.1160.10">
    <property type="entry name" value="Acetylglutamate kinase-like"/>
    <property type="match status" value="1"/>
</dbReference>
<dbReference type="HAMAP" id="MF_02082">
    <property type="entry name" value="LysZ"/>
    <property type="match status" value="1"/>
</dbReference>
<dbReference type="InterPro" id="IPR036393">
    <property type="entry name" value="AceGlu_kinase-like_sf"/>
</dbReference>
<dbReference type="InterPro" id="IPR004662">
    <property type="entry name" value="AcgluKinase_fam"/>
</dbReference>
<dbReference type="InterPro" id="IPR001048">
    <property type="entry name" value="Asp/Glu/Uridylate_kinase"/>
</dbReference>
<dbReference type="InterPro" id="IPR001057">
    <property type="entry name" value="Glu/AcGlu_kinase"/>
</dbReference>
<dbReference type="InterPro" id="IPR037529">
    <property type="entry name" value="LysZ"/>
</dbReference>
<dbReference type="NCBIfam" id="TIGR00761">
    <property type="entry name" value="argB"/>
    <property type="match status" value="1"/>
</dbReference>
<dbReference type="NCBIfam" id="NF010662">
    <property type="entry name" value="PRK14058.1-4"/>
    <property type="match status" value="1"/>
</dbReference>
<dbReference type="PANTHER" id="PTHR23342">
    <property type="entry name" value="N-ACETYLGLUTAMATE SYNTHASE"/>
    <property type="match status" value="1"/>
</dbReference>
<dbReference type="PANTHER" id="PTHR23342:SF0">
    <property type="entry name" value="N-ACETYLGLUTAMATE SYNTHASE, MITOCHONDRIAL"/>
    <property type="match status" value="1"/>
</dbReference>
<dbReference type="Pfam" id="PF00696">
    <property type="entry name" value="AA_kinase"/>
    <property type="match status" value="1"/>
</dbReference>
<dbReference type="PIRSF" id="PIRSF000728">
    <property type="entry name" value="NAGK"/>
    <property type="match status" value="1"/>
</dbReference>
<dbReference type="PRINTS" id="PR00474">
    <property type="entry name" value="GLU5KINASE"/>
</dbReference>
<dbReference type="SUPFAM" id="SSF53633">
    <property type="entry name" value="Carbamate kinase-like"/>
    <property type="match status" value="1"/>
</dbReference>
<proteinExistence type="inferred from homology"/>
<gene>
    <name evidence="1" type="primary">lysZ</name>
    <name type="ordered locus">Pisl_0277</name>
</gene>
<evidence type="ECO:0000255" key="1">
    <source>
        <dbReference type="HAMAP-Rule" id="MF_02082"/>
    </source>
</evidence>
<accession>A1RR74</accession>
<comment type="function">
    <text evidence="1">Involved in both the arginine and lysine biosynthetic pathways. Phosphorylates the LysW-bound precursors glutamate (for arginine biosynthesis), respectively alpha-aminoadipate (for lysine biosynthesis).</text>
</comment>
<comment type="catalytic activity">
    <reaction evidence="1">
        <text>[amino-group carrier protein]-C-terminal-N-(1,4-dicarboxybutan-1-yl)-L-glutamine + ATP = [amino-group carrier protein]-C-terminal-N-(1-carboxy-5-phosphooxy-5-oxopentan-1-yl)-L-glutamine + ADP</text>
        <dbReference type="Rhea" id="RHEA:41944"/>
        <dbReference type="Rhea" id="RHEA-COMP:9694"/>
        <dbReference type="Rhea" id="RHEA-COMP:9712"/>
        <dbReference type="ChEBI" id="CHEBI:30616"/>
        <dbReference type="ChEBI" id="CHEBI:78499"/>
        <dbReference type="ChEBI" id="CHEBI:78503"/>
        <dbReference type="ChEBI" id="CHEBI:456216"/>
        <dbReference type="EC" id="2.7.2.17"/>
    </reaction>
</comment>
<comment type="catalytic activity">
    <reaction evidence="1">
        <text>[amino-group carrier protein]-C-terminal-gamma-(L-glutamyl)-L-glutamate + ATP = [amino-group carrier protein]-C-terminal-gamma-(5-phospho-L-glutamyl)-L-glutamate + ADP</text>
        <dbReference type="Rhea" id="RHEA:52632"/>
        <dbReference type="Rhea" id="RHEA-COMP:13311"/>
        <dbReference type="Rhea" id="RHEA-COMP:13313"/>
        <dbReference type="ChEBI" id="CHEBI:30616"/>
        <dbReference type="ChEBI" id="CHEBI:136714"/>
        <dbReference type="ChEBI" id="CHEBI:136717"/>
        <dbReference type="ChEBI" id="CHEBI:456216"/>
        <dbReference type="EC" id="2.7.2.19"/>
    </reaction>
</comment>
<comment type="pathway">
    <text evidence="1">Amino-acid biosynthesis; L-lysine biosynthesis via AAA pathway; L-lysine from L-alpha-aminoadipate (Thermus route): step 2/5.</text>
</comment>
<comment type="pathway">
    <text evidence="1">Amino-acid biosynthesis; L-arginine biosynthesis.</text>
</comment>
<comment type="subcellular location">
    <subcellularLocation>
        <location evidence="1">Cytoplasm</location>
    </subcellularLocation>
</comment>
<comment type="similarity">
    <text evidence="1">Belongs to the acetylglutamate kinase family. LysZ subfamily.</text>
</comment>
<reference key="1">
    <citation type="submission" date="2006-12" db="EMBL/GenBank/DDBJ databases">
        <title>Complete sequence of Pyrobaculum islandicum DSM 4184.</title>
        <authorList>
            <person name="Copeland A."/>
            <person name="Lucas S."/>
            <person name="Lapidus A."/>
            <person name="Barry K."/>
            <person name="Detter J.C."/>
            <person name="Glavina del Rio T."/>
            <person name="Dalin E."/>
            <person name="Tice H."/>
            <person name="Pitluck S."/>
            <person name="Meincke L."/>
            <person name="Brettin T."/>
            <person name="Bruce D."/>
            <person name="Han C."/>
            <person name="Tapia R."/>
            <person name="Gilna P."/>
            <person name="Schmutz J."/>
            <person name="Larimer F."/>
            <person name="Land M."/>
            <person name="Hauser L."/>
            <person name="Kyrpides N."/>
            <person name="Mikhailova N."/>
            <person name="Cozen A.E."/>
            <person name="Fitz-Gibbon S.T."/>
            <person name="House C.H."/>
            <person name="Saltikov C."/>
            <person name="Lowe T."/>
            <person name="Richardson P."/>
        </authorList>
    </citation>
    <scope>NUCLEOTIDE SEQUENCE [LARGE SCALE GENOMIC DNA]</scope>
    <source>
        <strain>DSM 4184 / JCM 9189 / GEO3</strain>
    </source>
</reference>